<organism>
    <name type="scientific">Rattus norvegicus</name>
    <name type="common">Rat</name>
    <dbReference type="NCBI Taxonomy" id="10116"/>
    <lineage>
        <taxon>Eukaryota</taxon>
        <taxon>Metazoa</taxon>
        <taxon>Chordata</taxon>
        <taxon>Craniata</taxon>
        <taxon>Vertebrata</taxon>
        <taxon>Euteleostomi</taxon>
        <taxon>Mammalia</taxon>
        <taxon>Eutheria</taxon>
        <taxon>Euarchontoglires</taxon>
        <taxon>Glires</taxon>
        <taxon>Rodentia</taxon>
        <taxon>Myomorpha</taxon>
        <taxon>Muroidea</taxon>
        <taxon>Muridae</taxon>
        <taxon>Murinae</taxon>
        <taxon>Rattus</taxon>
    </lineage>
</organism>
<feature type="chain" id="PRO_0000064385" description="5E5 antigen">
    <location>
        <begin position="1"/>
        <end position="825"/>
    </location>
</feature>
<feature type="region of interest" description="Disordered" evidence="1">
    <location>
        <begin position="126"/>
        <end position="825"/>
    </location>
</feature>
<feature type="compositionally biased region" description="Pro residues" evidence="1">
    <location>
        <begin position="157"/>
        <end position="180"/>
    </location>
</feature>
<feature type="compositionally biased region" description="Polar residues" evidence="1">
    <location>
        <begin position="191"/>
        <end position="200"/>
    </location>
</feature>
<feature type="compositionally biased region" description="Basic and acidic residues" evidence="1">
    <location>
        <begin position="217"/>
        <end position="237"/>
    </location>
</feature>
<feature type="compositionally biased region" description="Low complexity" evidence="1">
    <location>
        <begin position="247"/>
        <end position="256"/>
    </location>
</feature>
<feature type="compositionally biased region" description="Basic and acidic residues" evidence="1">
    <location>
        <begin position="257"/>
        <end position="277"/>
    </location>
</feature>
<feature type="compositionally biased region" description="Basic and acidic residues" evidence="1">
    <location>
        <begin position="315"/>
        <end position="342"/>
    </location>
</feature>
<feature type="compositionally biased region" description="Basic and acidic residues" evidence="1">
    <location>
        <begin position="392"/>
        <end position="406"/>
    </location>
</feature>
<feature type="compositionally biased region" description="Basic residues" evidence="1">
    <location>
        <begin position="437"/>
        <end position="449"/>
    </location>
</feature>
<feature type="compositionally biased region" description="Low complexity" evidence="1">
    <location>
        <begin position="455"/>
        <end position="477"/>
    </location>
</feature>
<feature type="compositionally biased region" description="Basic residues" evidence="1">
    <location>
        <begin position="485"/>
        <end position="505"/>
    </location>
</feature>
<feature type="compositionally biased region" description="Polar residues" evidence="1">
    <location>
        <begin position="524"/>
        <end position="536"/>
    </location>
</feature>
<feature type="compositionally biased region" description="Low complexity" evidence="1">
    <location>
        <begin position="537"/>
        <end position="562"/>
    </location>
</feature>
<feature type="compositionally biased region" description="Basic residues" evidence="1">
    <location>
        <begin position="565"/>
        <end position="575"/>
    </location>
</feature>
<feature type="compositionally biased region" description="Gly residues" evidence="1">
    <location>
        <begin position="576"/>
        <end position="588"/>
    </location>
</feature>
<feature type="compositionally biased region" description="Pro residues" evidence="1">
    <location>
        <begin position="721"/>
        <end position="733"/>
    </location>
</feature>
<feature type="compositionally biased region" description="Low complexity" evidence="1">
    <location>
        <begin position="734"/>
        <end position="750"/>
    </location>
</feature>
<keyword id="KW-0238">DNA-binding</keyword>
<keyword id="KW-0539">Nucleus</keyword>
<keyword id="KW-1185">Reference proteome</keyword>
<proteinExistence type="evidence at transcript level"/>
<comment type="function">
    <text>Might have DNA-binding ability.</text>
</comment>
<comment type="subcellular location">
    <subcellularLocation>
        <location>Nucleus</location>
    </subcellularLocation>
</comment>
<comment type="tissue specificity">
    <text>Expressed in neurons.</text>
</comment>
<dbReference type="EMBL" id="D37934">
    <property type="protein sequence ID" value="BAA07153.1"/>
    <property type="molecule type" value="mRNA"/>
</dbReference>
<dbReference type="PIR" id="JC4163">
    <property type="entry name" value="JC4163"/>
</dbReference>
<dbReference type="STRING" id="10116.ENSRNOP00000061430"/>
<dbReference type="PaxDb" id="10116-ENSRNOP00000061430"/>
<dbReference type="eggNOG" id="ENOG502R1RA">
    <property type="taxonomic scope" value="Eukaryota"/>
</dbReference>
<dbReference type="InParanoid" id="Q63003"/>
<dbReference type="Proteomes" id="UP000002494">
    <property type="component" value="Unplaced"/>
</dbReference>
<dbReference type="GO" id="GO:0005634">
    <property type="term" value="C:nucleus"/>
    <property type="evidence" value="ECO:0007669"/>
    <property type="project" value="UniProtKB-SubCell"/>
</dbReference>
<dbReference type="GO" id="GO:0003677">
    <property type="term" value="F:DNA binding"/>
    <property type="evidence" value="ECO:0007669"/>
    <property type="project" value="UniProtKB-KW"/>
</dbReference>
<dbReference type="GO" id="GO:0004672">
    <property type="term" value="F:protein kinase activity"/>
    <property type="evidence" value="ECO:0000318"/>
    <property type="project" value="GO_Central"/>
</dbReference>
<dbReference type="PANTHER" id="PTHR24417">
    <property type="entry name" value="SERINE/THREONINE-PROTEIN KINASE LMTK1"/>
    <property type="match status" value="1"/>
</dbReference>
<dbReference type="PANTHER" id="PTHR24417:SF2">
    <property type="entry name" value="SERINE_THREONINE-PROTEIN KINASE LMTK3"/>
    <property type="match status" value="1"/>
</dbReference>
<accession>Q63003</accession>
<protein>
    <recommendedName>
        <fullName>5E5 antigen</fullName>
    </recommendedName>
</protein>
<name>5E5_RAT</name>
<sequence length="825" mass="86831">MFLEVADLKDGLWVWKVVFLQVCIEASGWGAEVRDSCGCGDSSSHQTDDPATALALHVACHSFKGQLVQQTLLLGTRPRVWVNNIPQEGPSLPLRQWLLPQCPSLNRSGSAMGTGWGLSGLSPTALSRDGYETETPFSPEGAFPGGGPAEEEGVPRPRAPPEPPDPGAPRPPPDPGPLPLPGSQEKPTFVVQVSTEQLLMSTGGCDKEPPRGQGVDTRGDRTQEGGEKPREQREGPRPEQGPDIPGQQEESPQQEPSSERGDSVGEREARSPGHEGEGGGEWPGISGERRESPGEWGADVPRGRGEGAGEWGSDVPKDRGEGGREWGPEAAQEHGEAARDWTSESPRTLGEDARDWGSSSRDAAGSSPCALRGSLAPERLGDGPWPAWPSPQEREPGPRDRVESPREWGGTESPRGWEAGPREWGPSPGGRGDGPRRRPRKRRGRKGRMGRQLETTATSASATGGPAEEAGASAPEGQAGGGPRGRARGPRQQARRRHGPQRRRGPPQAGEEGPGDATLVLGLGTTSGEQRADQSQTLPALAGAPTAHAHAVPGPGPAAATLGGRGRRGSWRGGRRGGGAGASGGGRGGRGRGRGGRRGSGLSGTREDAGSPSARRGEQRRRGHGPPAAGAAQVSTRGRRARGQRTGEEAQDGLLPRGRDRLPLRPGDSNQRVERPGHPRGGHGAINAPSAPDASPPHHPRRWVSQQRQRLWRQFRVGGGFPPPPPTRPPPVLLPLLRLTCAGDPGASRPGSRRPARRPRGELTPQRPSPFAPQEEGLRAESCVDDGAIAPDTDTASGEVPEAGPSLSSTMCQMGRPRPSPKSPR</sequence>
<reference key="1">
    <citation type="journal article" date="1995" name="J. Biochem.">
        <title>Cloning and sequence analysis of cDNA for a possible DNA-binding protein 5E5 in the nervous system.</title>
        <authorList>
            <person name="Suzuki E."/>
            <person name="Kojima N."/>
            <person name="Yoshimura K."/>
            <person name="Uyemura K."/>
            <person name="Obata K."/>
            <person name="Akagawa K."/>
        </authorList>
    </citation>
    <scope>NUCLEOTIDE SEQUENCE [MRNA]</scope>
    <source>
        <strain>Wistar</strain>
        <tissue>Brain</tissue>
    </source>
</reference>
<evidence type="ECO:0000256" key="1">
    <source>
        <dbReference type="SAM" id="MobiDB-lite"/>
    </source>
</evidence>